<evidence type="ECO:0000255" key="1">
    <source>
        <dbReference type="HAMAP-Rule" id="MF_00340"/>
    </source>
</evidence>
<evidence type="ECO:0000305" key="2"/>
<dbReference type="EMBL" id="CP000240">
    <property type="protein sequence ID" value="ABD01149.1"/>
    <property type="molecule type" value="Genomic_DNA"/>
</dbReference>
<dbReference type="RefSeq" id="WP_011431820.1">
    <property type="nucleotide sequence ID" value="NC_007776.1"/>
</dbReference>
<dbReference type="SMR" id="Q2JHQ5"/>
<dbReference type="STRING" id="321332.CYB_0148"/>
<dbReference type="KEGG" id="cyb:CYB_0148"/>
<dbReference type="eggNOG" id="COG0333">
    <property type="taxonomic scope" value="Bacteria"/>
</dbReference>
<dbReference type="HOGENOM" id="CLU_199882_0_0_3"/>
<dbReference type="OrthoDB" id="541730at2"/>
<dbReference type="Proteomes" id="UP000001938">
    <property type="component" value="Chromosome"/>
</dbReference>
<dbReference type="GO" id="GO:0015934">
    <property type="term" value="C:large ribosomal subunit"/>
    <property type="evidence" value="ECO:0007669"/>
    <property type="project" value="InterPro"/>
</dbReference>
<dbReference type="GO" id="GO:0003735">
    <property type="term" value="F:structural constituent of ribosome"/>
    <property type="evidence" value="ECO:0007669"/>
    <property type="project" value="InterPro"/>
</dbReference>
<dbReference type="GO" id="GO:0006412">
    <property type="term" value="P:translation"/>
    <property type="evidence" value="ECO:0007669"/>
    <property type="project" value="UniProtKB-UniRule"/>
</dbReference>
<dbReference type="HAMAP" id="MF_00340">
    <property type="entry name" value="Ribosomal_bL32"/>
    <property type="match status" value="1"/>
</dbReference>
<dbReference type="InterPro" id="IPR002677">
    <property type="entry name" value="Ribosomal_bL32"/>
</dbReference>
<dbReference type="Pfam" id="PF01783">
    <property type="entry name" value="Ribosomal_L32p"/>
    <property type="match status" value="1"/>
</dbReference>
<accession>Q2JHQ5</accession>
<protein>
    <recommendedName>
        <fullName evidence="1">Large ribosomal subunit protein bL32</fullName>
    </recommendedName>
    <alternativeName>
        <fullName evidence="2">50S ribosomal protein L32</fullName>
    </alternativeName>
</protein>
<reference key="1">
    <citation type="journal article" date="2007" name="ISME J.">
        <title>Population level functional diversity in a microbial community revealed by comparative genomic and metagenomic analyses.</title>
        <authorList>
            <person name="Bhaya D."/>
            <person name="Grossman A.R."/>
            <person name="Steunou A.-S."/>
            <person name="Khuri N."/>
            <person name="Cohan F.M."/>
            <person name="Hamamura N."/>
            <person name="Melendrez M.C."/>
            <person name="Bateson M.M."/>
            <person name="Ward D.M."/>
            <person name="Heidelberg J.F."/>
        </authorList>
    </citation>
    <scope>NUCLEOTIDE SEQUENCE [LARGE SCALE GENOMIC DNA]</scope>
    <source>
        <strain>JA-2-3B'a(2-13)</strain>
    </source>
</reference>
<comment type="similarity">
    <text evidence="1">Belongs to the bacterial ribosomal protein bL32 family.</text>
</comment>
<gene>
    <name evidence="1" type="primary">rpmF</name>
    <name evidence="1" type="synonym">rpl32</name>
    <name type="ordered locus">CYB_0148</name>
</gene>
<organism>
    <name type="scientific">Synechococcus sp. (strain JA-2-3B'a(2-13))</name>
    <name type="common">Cyanobacteria bacterium Yellowstone B-Prime</name>
    <dbReference type="NCBI Taxonomy" id="321332"/>
    <lineage>
        <taxon>Bacteria</taxon>
        <taxon>Bacillati</taxon>
        <taxon>Cyanobacteriota</taxon>
        <taxon>Cyanophyceae</taxon>
        <taxon>Synechococcales</taxon>
        <taxon>Synechococcaceae</taxon>
        <taxon>Synechococcus</taxon>
    </lineage>
</organism>
<feature type="chain" id="PRO_0000296585" description="Large ribosomal subunit protein bL32">
    <location>
        <begin position="1"/>
        <end position="59"/>
    </location>
</feature>
<proteinExistence type="inferred from homology"/>
<sequence>MPVPKKKTSKARSRRRYAVWLGKAKLQAQRAMTIGRAILSGRNTGFYYPKAKSEEDEEE</sequence>
<keyword id="KW-1185">Reference proteome</keyword>
<keyword id="KW-0687">Ribonucleoprotein</keyword>
<keyword id="KW-0689">Ribosomal protein</keyword>
<name>RL32_SYNJB</name>